<dbReference type="EC" id="1.1.1.267" evidence="1"/>
<dbReference type="EMBL" id="AP008230">
    <property type="protein sequence ID" value="BAE84328.1"/>
    <property type="molecule type" value="Genomic_DNA"/>
</dbReference>
<dbReference type="RefSeq" id="WP_011460412.1">
    <property type="nucleotide sequence ID" value="NC_007907.1"/>
</dbReference>
<dbReference type="SMR" id="Q24UG4"/>
<dbReference type="STRING" id="138119.DSY2539"/>
<dbReference type="KEGG" id="dsy:DSY2539"/>
<dbReference type="eggNOG" id="COG0743">
    <property type="taxonomic scope" value="Bacteria"/>
</dbReference>
<dbReference type="HOGENOM" id="CLU_035714_4_0_9"/>
<dbReference type="UniPathway" id="UPA00056">
    <property type="reaction ID" value="UER00092"/>
</dbReference>
<dbReference type="Proteomes" id="UP000001946">
    <property type="component" value="Chromosome"/>
</dbReference>
<dbReference type="GO" id="GO:0030604">
    <property type="term" value="F:1-deoxy-D-xylulose-5-phosphate reductoisomerase activity"/>
    <property type="evidence" value="ECO:0007669"/>
    <property type="project" value="UniProtKB-UniRule"/>
</dbReference>
<dbReference type="GO" id="GO:0030145">
    <property type="term" value="F:manganese ion binding"/>
    <property type="evidence" value="ECO:0007669"/>
    <property type="project" value="TreeGrafter"/>
</dbReference>
<dbReference type="GO" id="GO:0070402">
    <property type="term" value="F:NADPH binding"/>
    <property type="evidence" value="ECO:0007669"/>
    <property type="project" value="InterPro"/>
</dbReference>
<dbReference type="GO" id="GO:0051484">
    <property type="term" value="P:isopentenyl diphosphate biosynthetic process, methylerythritol 4-phosphate pathway involved in terpenoid biosynthetic process"/>
    <property type="evidence" value="ECO:0007669"/>
    <property type="project" value="TreeGrafter"/>
</dbReference>
<dbReference type="FunFam" id="3.40.50.720:FF:000045">
    <property type="entry name" value="1-deoxy-D-xylulose 5-phosphate reductoisomerase"/>
    <property type="match status" value="1"/>
</dbReference>
<dbReference type="Gene3D" id="1.10.1740.10">
    <property type="match status" value="1"/>
</dbReference>
<dbReference type="Gene3D" id="3.40.50.720">
    <property type="entry name" value="NAD(P)-binding Rossmann-like Domain"/>
    <property type="match status" value="1"/>
</dbReference>
<dbReference type="HAMAP" id="MF_00183">
    <property type="entry name" value="DXP_reductoisom"/>
    <property type="match status" value="1"/>
</dbReference>
<dbReference type="InterPro" id="IPR003821">
    <property type="entry name" value="DXP_reductoisomerase"/>
</dbReference>
<dbReference type="InterPro" id="IPR013644">
    <property type="entry name" value="DXP_reductoisomerase_C"/>
</dbReference>
<dbReference type="InterPro" id="IPR013512">
    <property type="entry name" value="DXP_reductoisomerase_N"/>
</dbReference>
<dbReference type="InterPro" id="IPR026877">
    <property type="entry name" value="DXPR_C"/>
</dbReference>
<dbReference type="InterPro" id="IPR036169">
    <property type="entry name" value="DXPR_C_sf"/>
</dbReference>
<dbReference type="InterPro" id="IPR036291">
    <property type="entry name" value="NAD(P)-bd_dom_sf"/>
</dbReference>
<dbReference type="NCBIfam" id="TIGR00243">
    <property type="entry name" value="Dxr"/>
    <property type="match status" value="1"/>
</dbReference>
<dbReference type="NCBIfam" id="NF009114">
    <property type="entry name" value="PRK12464.1"/>
    <property type="match status" value="1"/>
</dbReference>
<dbReference type="PANTHER" id="PTHR30525">
    <property type="entry name" value="1-DEOXY-D-XYLULOSE 5-PHOSPHATE REDUCTOISOMERASE"/>
    <property type="match status" value="1"/>
</dbReference>
<dbReference type="PANTHER" id="PTHR30525:SF0">
    <property type="entry name" value="1-DEOXY-D-XYLULOSE 5-PHOSPHATE REDUCTOISOMERASE, CHLOROPLASTIC"/>
    <property type="match status" value="1"/>
</dbReference>
<dbReference type="Pfam" id="PF08436">
    <property type="entry name" value="DXP_redisom_C"/>
    <property type="match status" value="1"/>
</dbReference>
<dbReference type="Pfam" id="PF02670">
    <property type="entry name" value="DXP_reductoisom"/>
    <property type="match status" value="1"/>
</dbReference>
<dbReference type="Pfam" id="PF13288">
    <property type="entry name" value="DXPR_C"/>
    <property type="match status" value="1"/>
</dbReference>
<dbReference type="PIRSF" id="PIRSF006205">
    <property type="entry name" value="Dxp_reductismrs"/>
    <property type="match status" value="1"/>
</dbReference>
<dbReference type="SUPFAM" id="SSF69055">
    <property type="entry name" value="1-deoxy-D-xylulose-5-phosphate reductoisomerase, C-terminal domain"/>
    <property type="match status" value="1"/>
</dbReference>
<dbReference type="SUPFAM" id="SSF55347">
    <property type="entry name" value="Glyceraldehyde-3-phosphate dehydrogenase-like, C-terminal domain"/>
    <property type="match status" value="1"/>
</dbReference>
<dbReference type="SUPFAM" id="SSF51735">
    <property type="entry name" value="NAD(P)-binding Rossmann-fold domains"/>
    <property type="match status" value="1"/>
</dbReference>
<feature type="chain" id="PRO_1000020256" description="1-deoxy-D-xylulose 5-phosphate reductoisomerase">
    <location>
        <begin position="1"/>
        <end position="381"/>
    </location>
</feature>
<feature type="binding site" evidence="1">
    <location>
        <position position="10"/>
    </location>
    <ligand>
        <name>NADPH</name>
        <dbReference type="ChEBI" id="CHEBI:57783"/>
    </ligand>
</feature>
<feature type="binding site" evidence="1">
    <location>
        <position position="11"/>
    </location>
    <ligand>
        <name>NADPH</name>
        <dbReference type="ChEBI" id="CHEBI:57783"/>
    </ligand>
</feature>
<feature type="binding site" evidence="1">
    <location>
        <position position="12"/>
    </location>
    <ligand>
        <name>NADPH</name>
        <dbReference type="ChEBI" id="CHEBI:57783"/>
    </ligand>
</feature>
<feature type="binding site" evidence="1">
    <location>
        <position position="13"/>
    </location>
    <ligand>
        <name>NADPH</name>
        <dbReference type="ChEBI" id="CHEBI:57783"/>
    </ligand>
</feature>
<feature type="binding site" evidence="1">
    <location>
        <position position="36"/>
    </location>
    <ligand>
        <name>NADPH</name>
        <dbReference type="ChEBI" id="CHEBI:57783"/>
    </ligand>
</feature>
<feature type="binding site" evidence="1">
    <location>
        <position position="37"/>
    </location>
    <ligand>
        <name>NADPH</name>
        <dbReference type="ChEBI" id="CHEBI:57783"/>
    </ligand>
</feature>
<feature type="binding site" evidence="1">
    <location>
        <position position="38"/>
    </location>
    <ligand>
        <name>NADPH</name>
        <dbReference type="ChEBI" id="CHEBI:57783"/>
    </ligand>
</feature>
<feature type="binding site" evidence="1">
    <location>
        <position position="122"/>
    </location>
    <ligand>
        <name>NADPH</name>
        <dbReference type="ChEBI" id="CHEBI:57783"/>
    </ligand>
</feature>
<feature type="binding site" evidence="1">
    <location>
        <position position="123"/>
    </location>
    <ligand>
        <name>1-deoxy-D-xylulose 5-phosphate</name>
        <dbReference type="ChEBI" id="CHEBI:57792"/>
    </ligand>
</feature>
<feature type="binding site" evidence="1">
    <location>
        <position position="124"/>
    </location>
    <ligand>
        <name>NADPH</name>
        <dbReference type="ChEBI" id="CHEBI:57783"/>
    </ligand>
</feature>
<feature type="binding site" evidence="1">
    <location>
        <position position="148"/>
    </location>
    <ligand>
        <name>Mn(2+)</name>
        <dbReference type="ChEBI" id="CHEBI:29035"/>
    </ligand>
</feature>
<feature type="binding site" evidence="1">
    <location>
        <position position="149"/>
    </location>
    <ligand>
        <name>1-deoxy-D-xylulose 5-phosphate</name>
        <dbReference type="ChEBI" id="CHEBI:57792"/>
    </ligand>
</feature>
<feature type="binding site" evidence="1">
    <location>
        <position position="150"/>
    </location>
    <ligand>
        <name>1-deoxy-D-xylulose 5-phosphate</name>
        <dbReference type="ChEBI" id="CHEBI:57792"/>
    </ligand>
</feature>
<feature type="binding site" evidence="1">
    <location>
        <position position="150"/>
    </location>
    <ligand>
        <name>Mn(2+)</name>
        <dbReference type="ChEBI" id="CHEBI:29035"/>
    </ligand>
</feature>
<feature type="binding site" evidence="1">
    <location>
        <position position="173"/>
    </location>
    <ligand>
        <name>1-deoxy-D-xylulose 5-phosphate</name>
        <dbReference type="ChEBI" id="CHEBI:57792"/>
    </ligand>
</feature>
<feature type="binding site" evidence="1">
    <location>
        <position position="196"/>
    </location>
    <ligand>
        <name>1-deoxy-D-xylulose 5-phosphate</name>
        <dbReference type="ChEBI" id="CHEBI:57792"/>
    </ligand>
</feature>
<feature type="binding site" evidence="1">
    <location>
        <position position="202"/>
    </location>
    <ligand>
        <name>NADPH</name>
        <dbReference type="ChEBI" id="CHEBI:57783"/>
    </ligand>
</feature>
<feature type="binding site" evidence="1">
    <location>
        <position position="209"/>
    </location>
    <ligand>
        <name>1-deoxy-D-xylulose 5-phosphate</name>
        <dbReference type="ChEBI" id="CHEBI:57792"/>
    </ligand>
</feature>
<feature type="binding site" evidence="1">
    <location>
        <position position="214"/>
    </location>
    <ligand>
        <name>1-deoxy-D-xylulose 5-phosphate</name>
        <dbReference type="ChEBI" id="CHEBI:57792"/>
    </ligand>
</feature>
<feature type="binding site" evidence="1">
    <location>
        <position position="215"/>
    </location>
    <ligand>
        <name>1-deoxy-D-xylulose 5-phosphate</name>
        <dbReference type="ChEBI" id="CHEBI:57792"/>
    </ligand>
</feature>
<feature type="binding site" evidence="1">
    <location>
        <position position="218"/>
    </location>
    <ligand>
        <name>1-deoxy-D-xylulose 5-phosphate</name>
        <dbReference type="ChEBI" id="CHEBI:57792"/>
    </ligand>
</feature>
<feature type="binding site" evidence="1">
    <location>
        <position position="218"/>
    </location>
    <ligand>
        <name>Mn(2+)</name>
        <dbReference type="ChEBI" id="CHEBI:29035"/>
    </ligand>
</feature>
<gene>
    <name evidence="1" type="primary">dxr</name>
    <name type="ordered locus">DSY2539</name>
</gene>
<protein>
    <recommendedName>
        <fullName evidence="1">1-deoxy-D-xylulose 5-phosphate reductoisomerase</fullName>
        <shortName evidence="1">DXP reductoisomerase</shortName>
        <ecNumber evidence="1">1.1.1.267</ecNumber>
    </recommendedName>
    <alternativeName>
        <fullName evidence="1">1-deoxyxylulose-5-phosphate reductoisomerase</fullName>
    </alternativeName>
    <alternativeName>
        <fullName evidence="1">2-C-methyl-D-erythritol 4-phosphate synthase</fullName>
    </alternativeName>
</protein>
<proteinExistence type="inferred from homology"/>
<organism>
    <name type="scientific">Desulfitobacterium hafniense (strain Y51)</name>
    <dbReference type="NCBI Taxonomy" id="138119"/>
    <lineage>
        <taxon>Bacteria</taxon>
        <taxon>Bacillati</taxon>
        <taxon>Bacillota</taxon>
        <taxon>Clostridia</taxon>
        <taxon>Eubacteriales</taxon>
        <taxon>Desulfitobacteriaceae</taxon>
        <taxon>Desulfitobacterium</taxon>
    </lineage>
</organism>
<sequence>MKRLTILGSTGSIGTQTLDIVRQNPEQLEVFALAAGKNVQEIELQAREFKPRIIGLMEEKAARELKQRVADLDIEVVSGMEGLLRTVTDEVPDTVVTAISGRIGLEPTMEALKVGKDIALANKETLVAGGDLVMGTAQRLGRTILPVDSEHSAIFQCLEEDPRTLDKIILTASGGPFRGWSEEQLQEVTPERALQHPNWAMGAKITIDSATMMNKGLEVIEAHHLFHMEYDQIDVLIHPQSVIHSMVQYCDGSVLAQCGRPDMRLPIQYALTYPTRWPNPFERLDLRGKTLTFFDPEDYDFPALKLAYACGKRGGTLPAVMNAANEVAVHAFLARRVAYLEIIGLVDKVCSEHDVLDATDLETILNADHWARIRTEELIHG</sequence>
<comment type="function">
    <text evidence="1">Catalyzes the NADPH-dependent rearrangement and reduction of 1-deoxy-D-xylulose-5-phosphate (DXP) to 2-C-methyl-D-erythritol 4-phosphate (MEP).</text>
</comment>
<comment type="catalytic activity">
    <reaction evidence="1">
        <text>2-C-methyl-D-erythritol 4-phosphate + NADP(+) = 1-deoxy-D-xylulose 5-phosphate + NADPH + H(+)</text>
        <dbReference type="Rhea" id="RHEA:13717"/>
        <dbReference type="ChEBI" id="CHEBI:15378"/>
        <dbReference type="ChEBI" id="CHEBI:57783"/>
        <dbReference type="ChEBI" id="CHEBI:57792"/>
        <dbReference type="ChEBI" id="CHEBI:58262"/>
        <dbReference type="ChEBI" id="CHEBI:58349"/>
        <dbReference type="EC" id="1.1.1.267"/>
    </reaction>
    <physiologicalReaction direction="right-to-left" evidence="1">
        <dbReference type="Rhea" id="RHEA:13719"/>
    </physiologicalReaction>
</comment>
<comment type="cofactor">
    <cofactor evidence="1">
        <name>Mg(2+)</name>
        <dbReference type="ChEBI" id="CHEBI:18420"/>
    </cofactor>
    <cofactor evidence="1">
        <name>Mn(2+)</name>
        <dbReference type="ChEBI" id="CHEBI:29035"/>
    </cofactor>
</comment>
<comment type="pathway">
    <text evidence="1">Isoprenoid biosynthesis; isopentenyl diphosphate biosynthesis via DXP pathway; isopentenyl diphosphate from 1-deoxy-D-xylulose 5-phosphate: step 1/6.</text>
</comment>
<comment type="similarity">
    <text evidence="1">Belongs to the DXR family.</text>
</comment>
<evidence type="ECO:0000255" key="1">
    <source>
        <dbReference type="HAMAP-Rule" id="MF_00183"/>
    </source>
</evidence>
<name>DXR_DESHY</name>
<keyword id="KW-0414">Isoprene biosynthesis</keyword>
<keyword id="KW-0464">Manganese</keyword>
<keyword id="KW-0479">Metal-binding</keyword>
<keyword id="KW-0521">NADP</keyword>
<keyword id="KW-0560">Oxidoreductase</keyword>
<keyword id="KW-1185">Reference proteome</keyword>
<reference key="1">
    <citation type="journal article" date="2006" name="J. Bacteriol.">
        <title>Complete genome sequence of the dehalorespiring bacterium Desulfitobacterium hafniense Y51 and comparison with Dehalococcoides ethenogenes 195.</title>
        <authorList>
            <person name="Nonaka H."/>
            <person name="Keresztes G."/>
            <person name="Shinoda Y."/>
            <person name="Ikenaga Y."/>
            <person name="Abe M."/>
            <person name="Naito K."/>
            <person name="Inatomi K."/>
            <person name="Furukawa K."/>
            <person name="Inui M."/>
            <person name="Yukawa H."/>
        </authorList>
    </citation>
    <scope>NUCLEOTIDE SEQUENCE [LARGE SCALE GENOMIC DNA]</scope>
    <source>
        <strain>Y51</strain>
    </source>
</reference>
<accession>Q24UG4</accession>